<gene>
    <name type="primary">manX</name>
    <name type="ordered locus">SF1411</name>
    <name type="ordered locus">S1526</name>
</gene>
<protein>
    <recommendedName>
        <fullName evidence="2">PTS system mannose-specific EIIAB component</fullName>
        <ecNumber evidence="2">2.7.1.191</ecNumber>
    </recommendedName>
    <alternativeName>
        <fullName evidence="2">EIIAB-Man</fullName>
    </alternativeName>
    <alternativeName>
        <fullName evidence="2">EIII-Man</fullName>
    </alternativeName>
    <domain>
        <recommendedName>
            <fullName evidence="2">Mannose-specific phosphotransferase enzyme IIA component</fullName>
        </recommendedName>
        <alternativeName>
            <fullName evidence="2">PTS system mannose-specific EIIA component</fullName>
        </alternativeName>
    </domain>
    <domain>
        <recommendedName>
            <fullName evidence="2">Mannose-specific phosphotransferase enzyme IIB component</fullName>
        </recommendedName>
        <alternativeName>
            <fullName evidence="2">PTS system mannose-specific EIIB component</fullName>
        </alternativeName>
    </domain>
</protein>
<proteinExistence type="inferred from homology"/>
<sequence length="323" mass="35048">MTIAIVIGTHGWAAEQLLKTAEMLLGEQENVGWIDFVPGENAETLIEKYNAQLAKLDTTKGVLFLVDTWGGSPFNAASRIVVDKEHYEVIAGVNIPMLVETLMARDDDPSFDELVALAVETGREGVKALKAKPVEKAAPAPAAAAPKAAPTPAKPMGPNDYMVIGLARIDDRLIHGQVATRWTKETNVSRIIVVSDEVAADTVRKTLLTQVAPPGVTAHVVDVAKMIRVYNNPKYAGERVMLLFTNPTDVERLVEGGVKITSVNVGGMAFRQGKTQVNNAVSVDEKDIEAFKKLNARGIELEVRKVSTDPKLKMMDLISKIDK</sequence>
<comment type="function">
    <text evidence="2">The phosphoenolpyruvate-dependent sugar phosphotransferase system (sugar PTS), a major carbohydrate active transport system, catalyzes the phosphorylation of incoming sugar substrates concomitantly with their translocation across the cell membrane. The enzyme II ManXYZ PTS system is involved in mannose transport.</text>
</comment>
<comment type="catalytic activity">
    <reaction evidence="2">
        <text>D-mannose(out) + N(pros)-phospho-L-histidyl-[protein] = D-mannose 6-phosphate(in) + L-histidyl-[protein]</text>
        <dbReference type="Rhea" id="RHEA:49232"/>
        <dbReference type="Rhea" id="RHEA-COMP:9745"/>
        <dbReference type="Rhea" id="RHEA-COMP:9746"/>
        <dbReference type="ChEBI" id="CHEBI:4208"/>
        <dbReference type="ChEBI" id="CHEBI:29979"/>
        <dbReference type="ChEBI" id="CHEBI:58735"/>
        <dbReference type="ChEBI" id="CHEBI:64837"/>
        <dbReference type="EC" id="2.7.1.191"/>
    </reaction>
</comment>
<comment type="subunit">
    <text evidence="2">Homodimer.</text>
</comment>
<comment type="subcellular location">
    <subcellularLocation>
        <location evidence="2">Cytoplasm</location>
    </subcellularLocation>
    <subcellularLocation>
        <location evidence="2">Cell inner membrane</location>
        <topology evidence="2">Peripheral membrane protein</topology>
    </subcellularLocation>
</comment>
<comment type="domain">
    <text evidence="2 5">The PTS EIIA type-4 domain is phosphorylated by phospho-HPr on a histidyl residue. Then, it transfers the phosphoryl group to the PTS EIIB type-4 domain.</text>
</comment>
<comment type="domain">
    <text evidence="4">The PTS EIIB type-4 domain is phosphorylated by phospho-EIIA on a histidyl residue. Then, it transfers the phosphoryl group to the sugar substrate concomitantly with the sugar uptake processed by the PTS EIIC type-4 domain.</text>
</comment>
<accession>P69800</accession>
<accession>P08186</accession>
<accession>Q47350</accession>
<reference key="1">
    <citation type="journal article" date="2002" name="Nucleic Acids Res.">
        <title>Genome sequence of Shigella flexneri 2a: insights into pathogenicity through comparison with genomes of Escherichia coli K12 and O157.</title>
        <authorList>
            <person name="Jin Q."/>
            <person name="Yuan Z."/>
            <person name="Xu J."/>
            <person name="Wang Y."/>
            <person name="Shen Y."/>
            <person name="Lu W."/>
            <person name="Wang J."/>
            <person name="Liu H."/>
            <person name="Yang J."/>
            <person name="Yang F."/>
            <person name="Zhang X."/>
            <person name="Zhang J."/>
            <person name="Yang G."/>
            <person name="Wu H."/>
            <person name="Qu D."/>
            <person name="Dong J."/>
            <person name="Sun L."/>
            <person name="Xue Y."/>
            <person name="Zhao A."/>
            <person name="Gao Y."/>
            <person name="Zhu J."/>
            <person name="Kan B."/>
            <person name="Ding K."/>
            <person name="Chen S."/>
            <person name="Cheng H."/>
            <person name="Yao Z."/>
            <person name="He B."/>
            <person name="Chen R."/>
            <person name="Ma D."/>
            <person name="Qiang B."/>
            <person name="Wen Y."/>
            <person name="Hou Y."/>
            <person name="Yu J."/>
        </authorList>
    </citation>
    <scope>NUCLEOTIDE SEQUENCE [LARGE SCALE GENOMIC DNA]</scope>
    <source>
        <strain>301 / Serotype 2a</strain>
    </source>
</reference>
<reference key="2">
    <citation type="journal article" date="2003" name="Infect. Immun.">
        <title>Complete genome sequence and comparative genomics of Shigella flexneri serotype 2a strain 2457T.</title>
        <authorList>
            <person name="Wei J."/>
            <person name="Goldberg M.B."/>
            <person name="Burland V."/>
            <person name="Venkatesan M.M."/>
            <person name="Deng W."/>
            <person name="Fournier G."/>
            <person name="Mayhew G.F."/>
            <person name="Plunkett G. III"/>
            <person name="Rose D.J."/>
            <person name="Darling A."/>
            <person name="Mau B."/>
            <person name="Perna N.T."/>
            <person name="Payne S.M."/>
            <person name="Runyen-Janecky L.J."/>
            <person name="Zhou S."/>
            <person name="Schwartz D.C."/>
            <person name="Blattner F.R."/>
        </authorList>
    </citation>
    <scope>NUCLEOTIDE SEQUENCE [LARGE SCALE GENOMIC DNA]</scope>
    <source>
        <strain>ATCC 700930 / 2457T / Serotype 2a</strain>
    </source>
</reference>
<organism>
    <name type="scientific">Shigella flexneri</name>
    <dbReference type="NCBI Taxonomy" id="623"/>
    <lineage>
        <taxon>Bacteria</taxon>
        <taxon>Pseudomonadati</taxon>
        <taxon>Pseudomonadota</taxon>
        <taxon>Gammaproteobacteria</taxon>
        <taxon>Enterobacterales</taxon>
        <taxon>Enterobacteriaceae</taxon>
        <taxon>Shigella</taxon>
    </lineage>
</organism>
<evidence type="ECO:0000250" key="1"/>
<evidence type="ECO:0000250" key="2">
    <source>
        <dbReference type="UniProtKB" id="P69797"/>
    </source>
</evidence>
<evidence type="ECO:0000255" key="3">
    <source>
        <dbReference type="PROSITE-ProRule" id="PRU00419"/>
    </source>
</evidence>
<evidence type="ECO:0000255" key="4">
    <source>
        <dbReference type="PROSITE-ProRule" id="PRU00424"/>
    </source>
</evidence>
<evidence type="ECO:0000305" key="5"/>
<feature type="initiator methionine" description="Removed" evidence="1">
    <location>
        <position position="1"/>
    </location>
</feature>
<feature type="chain" id="PRO_0000186656" description="PTS system mannose-specific EIIAB component">
    <location>
        <begin position="2"/>
        <end position="323"/>
    </location>
</feature>
<feature type="domain" description="PTS EIIA type-4" evidence="3">
    <location>
        <begin position="2"/>
        <end position="126"/>
    </location>
</feature>
<feature type="domain" description="PTS EIIB type-4" evidence="4">
    <location>
        <begin position="160"/>
        <end position="323"/>
    </location>
</feature>
<feature type="region of interest" description="Hinge" evidence="2">
    <location>
        <begin position="137"/>
        <end position="155"/>
    </location>
</feature>
<feature type="active site" description="Tele-phosphohistidine intermediate; for EIIA activity" evidence="3">
    <location>
        <position position="10"/>
    </location>
</feature>
<feature type="active site" description="Pros-phosphohistidine intermediate; for EIIB activity" evidence="2">
    <location>
        <position position="175"/>
    </location>
</feature>
<feature type="site" description="Involved in the phosphoryl transfer between H-10 and H-175" evidence="2">
    <location>
        <position position="89"/>
    </location>
</feature>
<feature type="modified residue" description="Phosphohistidine; by HPr" evidence="2">
    <location>
        <position position="10"/>
    </location>
</feature>
<feature type="modified residue" description="N6-acetyllysine" evidence="2">
    <location>
        <position position="55"/>
    </location>
</feature>
<feature type="modified residue" description="Phosphohistidine; by EIIA" evidence="2 4">
    <location>
        <position position="175"/>
    </location>
</feature>
<feature type="modified residue" description="N6-acetyllysine" evidence="2">
    <location>
        <position position="234"/>
    </location>
</feature>
<keyword id="KW-0007">Acetylation</keyword>
<keyword id="KW-0997">Cell inner membrane</keyword>
<keyword id="KW-1003">Cell membrane</keyword>
<keyword id="KW-0963">Cytoplasm</keyword>
<keyword id="KW-0418">Kinase</keyword>
<keyword id="KW-0472">Membrane</keyword>
<keyword id="KW-0597">Phosphoprotein</keyword>
<keyword id="KW-0598">Phosphotransferase system</keyword>
<keyword id="KW-1185">Reference proteome</keyword>
<keyword id="KW-0762">Sugar transport</keyword>
<keyword id="KW-0808">Transferase</keyword>
<keyword id="KW-0813">Transport</keyword>
<dbReference type="EC" id="2.7.1.191" evidence="2"/>
<dbReference type="EMBL" id="AE005674">
    <property type="protein sequence ID" value="AAN43012.1"/>
    <property type="molecule type" value="Genomic_DNA"/>
</dbReference>
<dbReference type="EMBL" id="AE014073">
    <property type="protein sequence ID" value="AAP16907.1"/>
    <property type="molecule type" value="Genomic_DNA"/>
</dbReference>
<dbReference type="RefSeq" id="NP_707305.1">
    <property type="nucleotide sequence ID" value="NC_004337.2"/>
</dbReference>
<dbReference type="RefSeq" id="WP_000150543.1">
    <property type="nucleotide sequence ID" value="NZ_WPGW01000062.1"/>
</dbReference>
<dbReference type="SMR" id="P69800"/>
<dbReference type="STRING" id="198214.SF1411"/>
<dbReference type="PaxDb" id="198214-SF1411"/>
<dbReference type="GeneID" id="1024605"/>
<dbReference type="GeneID" id="93776066"/>
<dbReference type="KEGG" id="sfl:SF1411"/>
<dbReference type="KEGG" id="sfx:S1526"/>
<dbReference type="PATRIC" id="fig|198214.7.peg.1663"/>
<dbReference type="HOGENOM" id="CLU_074797_0_0_6"/>
<dbReference type="Proteomes" id="UP000001006">
    <property type="component" value="Chromosome"/>
</dbReference>
<dbReference type="Proteomes" id="UP000002673">
    <property type="component" value="Chromosome"/>
</dbReference>
<dbReference type="GO" id="GO:0005737">
    <property type="term" value="C:cytoplasm"/>
    <property type="evidence" value="ECO:0007669"/>
    <property type="project" value="UniProtKB-SubCell"/>
</dbReference>
<dbReference type="GO" id="GO:0005886">
    <property type="term" value="C:plasma membrane"/>
    <property type="evidence" value="ECO:0007669"/>
    <property type="project" value="UniProtKB-SubCell"/>
</dbReference>
<dbReference type="GO" id="GO:0016301">
    <property type="term" value="F:kinase activity"/>
    <property type="evidence" value="ECO:0007669"/>
    <property type="project" value="UniProtKB-KW"/>
</dbReference>
<dbReference type="GO" id="GO:0008982">
    <property type="term" value="F:protein-N(PI)-phosphohistidine-sugar phosphotransferase activity"/>
    <property type="evidence" value="ECO:0007669"/>
    <property type="project" value="InterPro"/>
</dbReference>
<dbReference type="GO" id="GO:0009401">
    <property type="term" value="P:phosphoenolpyruvate-dependent sugar phosphotransferase system"/>
    <property type="evidence" value="ECO:0007669"/>
    <property type="project" value="UniProtKB-KW"/>
</dbReference>
<dbReference type="CDD" id="cd00006">
    <property type="entry name" value="PTS_IIA_man"/>
    <property type="match status" value="1"/>
</dbReference>
<dbReference type="CDD" id="cd00001">
    <property type="entry name" value="PTS_IIB_man"/>
    <property type="match status" value="1"/>
</dbReference>
<dbReference type="FunFam" id="3.40.35.10:FF:000001">
    <property type="entry name" value="PTS system mannose-specific EIIAB component"/>
    <property type="match status" value="1"/>
</dbReference>
<dbReference type="FunFam" id="3.40.50.510:FF:000001">
    <property type="entry name" value="PTS system mannose-specific transporter subunit IIAB"/>
    <property type="match status" value="1"/>
</dbReference>
<dbReference type="Gene3D" id="3.40.50.510">
    <property type="entry name" value="Phosphotransferase system, mannose-type IIA component"/>
    <property type="match status" value="1"/>
</dbReference>
<dbReference type="Gene3D" id="3.40.35.10">
    <property type="entry name" value="Phosphotransferase system, sorbose subfamily IIB component"/>
    <property type="match status" value="1"/>
</dbReference>
<dbReference type="InterPro" id="IPR051471">
    <property type="entry name" value="Bacterial_PTS_sugar_comp"/>
</dbReference>
<dbReference type="InterPro" id="IPR013789">
    <property type="entry name" value="PTS_EIIA_man"/>
</dbReference>
<dbReference type="InterPro" id="IPR004701">
    <property type="entry name" value="PTS_EIIA_man-typ"/>
</dbReference>
<dbReference type="InterPro" id="IPR036662">
    <property type="entry name" value="PTS_EIIA_man-typ_sf"/>
</dbReference>
<dbReference type="InterPro" id="IPR033887">
    <property type="entry name" value="PTS_IIA_man"/>
</dbReference>
<dbReference type="InterPro" id="IPR004720">
    <property type="entry name" value="PTS_IIB_sorbose-sp"/>
</dbReference>
<dbReference type="InterPro" id="IPR036667">
    <property type="entry name" value="PTS_IIB_sorbose-sp_sf"/>
</dbReference>
<dbReference type="InterPro" id="IPR018455">
    <property type="entry name" value="PTS_IIB_sorbose-sp_subgr"/>
</dbReference>
<dbReference type="NCBIfam" id="TIGR00824">
    <property type="entry name" value="EIIA-man"/>
    <property type="match status" value="1"/>
</dbReference>
<dbReference type="NCBIfam" id="NF011670">
    <property type="entry name" value="PRK15088.1"/>
    <property type="match status" value="1"/>
</dbReference>
<dbReference type="NCBIfam" id="TIGR00854">
    <property type="entry name" value="pts-sorbose"/>
    <property type="match status" value="1"/>
</dbReference>
<dbReference type="PANTHER" id="PTHR33799">
    <property type="entry name" value="PTS PERMEASE-RELATED-RELATED"/>
    <property type="match status" value="1"/>
</dbReference>
<dbReference type="PANTHER" id="PTHR33799:SF1">
    <property type="entry name" value="PTS SYSTEM MANNOSE-SPECIFIC EIIAB COMPONENT-RELATED"/>
    <property type="match status" value="1"/>
</dbReference>
<dbReference type="Pfam" id="PF03610">
    <property type="entry name" value="EIIA-man"/>
    <property type="match status" value="1"/>
</dbReference>
<dbReference type="Pfam" id="PF03830">
    <property type="entry name" value="PTSIIB_sorb"/>
    <property type="match status" value="1"/>
</dbReference>
<dbReference type="SUPFAM" id="SSF52728">
    <property type="entry name" value="PTS IIb component"/>
    <property type="match status" value="1"/>
</dbReference>
<dbReference type="SUPFAM" id="SSF53062">
    <property type="entry name" value="PTS system fructose IIA component-like"/>
    <property type="match status" value="1"/>
</dbReference>
<dbReference type="PROSITE" id="PS51096">
    <property type="entry name" value="PTS_EIIA_TYPE_4"/>
    <property type="match status" value="1"/>
</dbReference>
<dbReference type="PROSITE" id="PS51101">
    <property type="entry name" value="PTS_EIIB_TYPE_4"/>
    <property type="match status" value="1"/>
</dbReference>
<name>PTNAB_SHIFL</name>